<organism>
    <name type="scientific">Bacteroides thetaiotaomicron (strain ATCC 29148 / DSM 2079 / JCM 5827 / CCUG 10774 / NCTC 10582 / VPI-5482 / E50)</name>
    <dbReference type="NCBI Taxonomy" id="226186"/>
    <lineage>
        <taxon>Bacteria</taxon>
        <taxon>Pseudomonadati</taxon>
        <taxon>Bacteroidota</taxon>
        <taxon>Bacteroidia</taxon>
        <taxon>Bacteroidales</taxon>
        <taxon>Bacteroidaceae</taxon>
        <taxon>Bacteroides</taxon>
    </lineage>
</organism>
<reference key="1">
    <citation type="journal article" date="2003" name="Science">
        <title>A genomic view of the human-Bacteroides thetaiotaomicron symbiosis.</title>
        <authorList>
            <person name="Xu J."/>
            <person name="Bjursell M.K."/>
            <person name="Himrod J."/>
            <person name="Deng S."/>
            <person name="Carmichael L.K."/>
            <person name="Chiang H.C."/>
            <person name="Hooper L.V."/>
            <person name="Gordon J.I."/>
        </authorList>
    </citation>
    <scope>NUCLEOTIDE SEQUENCE [LARGE SCALE GENOMIC DNA]</scope>
    <source>
        <strain>ATCC 29148 / DSM 2079 / JCM 5827 / CCUG 10774 / NCTC 10582 / VPI-5482 / E50</strain>
    </source>
</reference>
<protein>
    <recommendedName>
        <fullName evidence="1">Glutamate 5-kinase</fullName>
        <ecNumber evidence="1">2.7.2.11</ecNumber>
    </recommendedName>
    <alternativeName>
        <fullName evidence="1">Gamma-glutamyl kinase</fullName>
        <shortName evidence="1">GK</shortName>
    </alternativeName>
</protein>
<gene>
    <name evidence="1" type="primary">proB</name>
    <name type="ordered locus">BT_3719</name>
</gene>
<accession>Q8A1E7</accession>
<feature type="chain" id="PRO_0000109643" description="Glutamate 5-kinase">
    <location>
        <begin position="1"/>
        <end position="360"/>
    </location>
</feature>
<feature type="domain" description="PUA" evidence="1">
    <location>
        <begin position="278"/>
        <end position="356"/>
    </location>
</feature>
<feature type="binding site" evidence="1">
    <location>
        <position position="11"/>
    </location>
    <ligand>
        <name>ATP</name>
        <dbReference type="ChEBI" id="CHEBI:30616"/>
    </ligand>
</feature>
<feature type="binding site" evidence="1">
    <location>
        <position position="51"/>
    </location>
    <ligand>
        <name>substrate</name>
    </ligand>
</feature>
<feature type="binding site" evidence="1">
    <location>
        <position position="138"/>
    </location>
    <ligand>
        <name>substrate</name>
    </ligand>
</feature>
<feature type="binding site" evidence="1">
    <location>
        <position position="150"/>
    </location>
    <ligand>
        <name>substrate</name>
    </ligand>
</feature>
<keyword id="KW-0028">Amino-acid biosynthesis</keyword>
<keyword id="KW-0067">ATP-binding</keyword>
<keyword id="KW-0963">Cytoplasm</keyword>
<keyword id="KW-0418">Kinase</keyword>
<keyword id="KW-0547">Nucleotide-binding</keyword>
<keyword id="KW-0641">Proline biosynthesis</keyword>
<keyword id="KW-1185">Reference proteome</keyword>
<keyword id="KW-0808">Transferase</keyword>
<comment type="function">
    <text evidence="1">Catalyzes the transfer of a phosphate group to glutamate to form L-glutamate 5-phosphate.</text>
</comment>
<comment type="catalytic activity">
    <reaction evidence="1">
        <text>L-glutamate + ATP = L-glutamyl 5-phosphate + ADP</text>
        <dbReference type="Rhea" id="RHEA:14877"/>
        <dbReference type="ChEBI" id="CHEBI:29985"/>
        <dbReference type="ChEBI" id="CHEBI:30616"/>
        <dbReference type="ChEBI" id="CHEBI:58274"/>
        <dbReference type="ChEBI" id="CHEBI:456216"/>
        <dbReference type="EC" id="2.7.2.11"/>
    </reaction>
</comment>
<comment type="pathway">
    <text evidence="1">Amino-acid biosynthesis; L-proline biosynthesis; L-glutamate 5-semialdehyde from L-glutamate: step 1/2.</text>
</comment>
<comment type="subcellular location">
    <subcellularLocation>
        <location evidence="1">Cytoplasm</location>
    </subcellularLocation>
</comment>
<comment type="similarity">
    <text evidence="1">Belongs to the glutamate 5-kinase family.</text>
</comment>
<sequence length="360" mass="39454">MKQEFTRIAVKVGSNVLARRDGTLDVTRMSALVDQIAELNKSGVEIILISSGAVASGRSEIHPQKKLDSVDQRQLFSAVGQAKLINRYYELFREHGIAVGQVLTTKENFSTRRHYLNQKNCMTVMLENGVIPIVNENDTISVSELMFTDNDELSGLIASMMDAQALIILSNIDGIYNGSPSDPASAVIREIEHGKDLSNYIQATKSSFGRGGMLTKTNIARKVADEGITVIIANGKRDNILVDLLQQPDDTVCTRFIPSTEAVSSVKKWIAHSEGFAKGEIHINECATDILSSEKAASILPVGITHIEGEFEKDDIVRIMDFLGNQVGVGKANCDSAQAREAMGKHGKKPVVHYDYLYIE</sequence>
<name>PROB_BACTN</name>
<proteinExistence type="inferred from homology"/>
<dbReference type="EC" id="2.7.2.11" evidence="1"/>
<dbReference type="EMBL" id="AE015928">
    <property type="protein sequence ID" value="AAO78824.1"/>
    <property type="molecule type" value="Genomic_DNA"/>
</dbReference>
<dbReference type="RefSeq" id="NP_812630.1">
    <property type="nucleotide sequence ID" value="NC_004663.1"/>
</dbReference>
<dbReference type="RefSeq" id="WP_011108944.1">
    <property type="nucleotide sequence ID" value="NC_004663.1"/>
</dbReference>
<dbReference type="SMR" id="Q8A1E7"/>
<dbReference type="FunCoup" id="Q8A1E7">
    <property type="interactions" value="379"/>
</dbReference>
<dbReference type="STRING" id="226186.BT_3719"/>
<dbReference type="PaxDb" id="226186-BT_3719"/>
<dbReference type="EnsemblBacteria" id="AAO78824">
    <property type="protein sequence ID" value="AAO78824"/>
    <property type="gene ID" value="BT_3719"/>
</dbReference>
<dbReference type="GeneID" id="60924888"/>
<dbReference type="KEGG" id="bth:BT_3719"/>
<dbReference type="PATRIC" id="fig|226186.12.peg.3780"/>
<dbReference type="eggNOG" id="COG0263">
    <property type="taxonomic scope" value="Bacteria"/>
</dbReference>
<dbReference type="HOGENOM" id="CLU_025400_2_0_10"/>
<dbReference type="InParanoid" id="Q8A1E7"/>
<dbReference type="OrthoDB" id="9804434at2"/>
<dbReference type="UniPathway" id="UPA00098">
    <property type="reaction ID" value="UER00359"/>
</dbReference>
<dbReference type="Proteomes" id="UP000001414">
    <property type="component" value="Chromosome"/>
</dbReference>
<dbReference type="GO" id="GO:0005829">
    <property type="term" value="C:cytosol"/>
    <property type="evidence" value="ECO:0000318"/>
    <property type="project" value="GO_Central"/>
</dbReference>
<dbReference type="GO" id="GO:0005524">
    <property type="term" value="F:ATP binding"/>
    <property type="evidence" value="ECO:0007669"/>
    <property type="project" value="UniProtKB-KW"/>
</dbReference>
<dbReference type="GO" id="GO:0004349">
    <property type="term" value="F:glutamate 5-kinase activity"/>
    <property type="evidence" value="ECO:0000318"/>
    <property type="project" value="GO_Central"/>
</dbReference>
<dbReference type="GO" id="GO:0003723">
    <property type="term" value="F:RNA binding"/>
    <property type="evidence" value="ECO:0007669"/>
    <property type="project" value="InterPro"/>
</dbReference>
<dbReference type="GO" id="GO:0055129">
    <property type="term" value="P:L-proline biosynthetic process"/>
    <property type="evidence" value="ECO:0007669"/>
    <property type="project" value="UniProtKB-UniRule"/>
</dbReference>
<dbReference type="GO" id="GO:0006561">
    <property type="term" value="P:proline biosynthetic process"/>
    <property type="evidence" value="ECO:0000318"/>
    <property type="project" value="GO_Central"/>
</dbReference>
<dbReference type="CDD" id="cd04242">
    <property type="entry name" value="AAK_G5K_ProB"/>
    <property type="match status" value="1"/>
</dbReference>
<dbReference type="CDD" id="cd21157">
    <property type="entry name" value="PUA_G5K"/>
    <property type="match status" value="1"/>
</dbReference>
<dbReference type="FunFam" id="3.40.1160.10:FF:000040">
    <property type="entry name" value="Glutamate 5-kinase"/>
    <property type="match status" value="1"/>
</dbReference>
<dbReference type="Gene3D" id="3.40.1160.10">
    <property type="entry name" value="Acetylglutamate kinase-like"/>
    <property type="match status" value="1"/>
</dbReference>
<dbReference type="Gene3D" id="2.30.130.10">
    <property type="entry name" value="PUA domain"/>
    <property type="match status" value="1"/>
</dbReference>
<dbReference type="HAMAP" id="MF_00456">
    <property type="entry name" value="ProB"/>
    <property type="match status" value="1"/>
</dbReference>
<dbReference type="InterPro" id="IPR036393">
    <property type="entry name" value="AceGlu_kinase-like_sf"/>
</dbReference>
<dbReference type="InterPro" id="IPR001048">
    <property type="entry name" value="Asp/Glu/Uridylate_kinase"/>
</dbReference>
<dbReference type="InterPro" id="IPR041739">
    <property type="entry name" value="G5K_ProB"/>
</dbReference>
<dbReference type="InterPro" id="IPR001057">
    <property type="entry name" value="Glu/AcGlu_kinase"/>
</dbReference>
<dbReference type="InterPro" id="IPR011529">
    <property type="entry name" value="Glu_5kinase"/>
</dbReference>
<dbReference type="InterPro" id="IPR005715">
    <property type="entry name" value="Glu_5kinase/COase_Synthase"/>
</dbReference>
<dbReference type="InterPro" id="IPR019797">
    <property type="entry name" value="Glutamate_5-kinase_CS"/>
</dbReference>
<dbReference type="InterPro" id="IPR002478">
    <property type="entry name" value="PUA"/>
</dbReference>
<dbReference type="InterPro" id="IPR015947">
    <property type="entry name" value="PUA-like_sf"/>
</dbReference>
<dbReference type="InterPro" id="IPR036974">
    <property type="entry name" value="PUA_sf"/>
</dbReference>
<dbReference type="NCBIfam" id="TIGR01027">
    <property type="entry name" value="proB"/>
    <property type="match status" value="1"/>
</dbReference>
<dbReference type="PANTHER" id="PTHR43654">
    <property type="entry name" value="GLUTAMATE 5-KINASE"/>
    <property type="match status" value="1"/>
</dbReference>
<dbReference type="PANTHER" id="PTHR43654:SF1">
    <property type="entry name" value="ISOPENTENYL PHOSPHATE KINASE"/>
    <property type="match status" value="1"/>
</dbReference>
<dbReference type="Pfam" id="PF00696">
    <property type="entry name" value="AA_kinase"/>
    <property type="match status" value="1"/>
</dbReference>
<dbReference type="Pfam" id="PF01472">
    <property type="entry name" value="PUA"/>
    <property type="match status" value="1"/>
</dbReference>
<dbReference type="PIRSF" id="PIRSF000729">
    <property type="entry name" value="GK"/>
    <property type="match status" value="1"/>
</dbReference>
<dbReference type="PRINTS" id="PR00474">
    <property type="entry name" value="GLU5KINASE"/>
</dbReference>
<dbReference type="SUPFAM" id="SSF53633">
    <property type="entry name" value="Carbamate kinase-like"/>
    <property type="match status" value="1"/>
</dbReference>
<dbReference type="SUPFAM" id="SSF88697">
    <property type="entry name" value="PUA domain-like"/>
    <property type="match status" value="1"/>
</dbReference>
<dbReference type="PROSITE" id="PS00902">
    <property type="entry name" value="GLUTAMATE_5_KINASE"/>
    <property type="match status" value="1"/>
</dbReference>
<dbReference type="PROSITE" id="PS50890">
    <property type="entry name" value="PUA"/>
    <property type="match status" value="1"/>
</dbReference>
<evidence type="ECO:0000255" key="1">
    <source>
        <dbReference type="HAMAP-Rule" id="MF_00456"/>
    </source>
</evidence>